<feature type="signal peptide" evidence="1">
    <location>
        <begin position="1"/>
        <end position="32"/>
    </location>
</feature>
<feature type="chain" id="PRO_0000027504" description="Brain-specific serine protease 4">
    <location>
        <begin position="33"/>
        <end position="317"/>
    </location>
</feature>
<feature type="domain" description="Peptidase S1" evidence="2">
    <location>
        <begin position="50"/>
        <end position="290"/>
    </location>
</feature>
<feature type="active site" description="Charge relay system" evidence="2">
    <location>
        <position position="90"/>
    </location>
</feature>
<feature type="active site" description="Charge relay system" evidence="2">
    <location>
        <position position="141"/>
    </location>
</feature>
<feature type="active site" description="Charge relay system" evidence="2">
    <location>
        <position position="242"/>
    </location>
</feature>
<feature type="glycosylation site" description="N-linked (GlcNAc...) asparagine" evidence="3">
    <location>
        <position position="70"/>
    </location>
</feature>
<feature type="disulfide bond" evidence="2">
    <location>
        <begin position="75"/>
        <end position="91"/>
    </location>
</feature>
<feature type="disulfide bond" evidence="2">
    <location>
        <begin position="175"/>
        <end position="248"/>
    </location>
</feature>
<feature type="disulfide bond" evidence="2">
    <location>
        <begin position="208"/>
        <end position="227"/>
    </location>
</feature>
<feature type="disulfide bond" evidence="2">
    <location>
        <begin position="238"/>
        <end position="266"/>
    </location>
</feature>
<gene>
    <name type="primary">PRSS22</name>
    <name type="synonym">BSSP4</name>
    <name type="synonym">PRSS26</name>
    <name type="ORF">SP001LA</name>
    <name type="ORF">UNQ302/PRO343</name>
</gene>
<evidence type="ECO:0000255" key="1"/>
<evidence type="ECO:0000255" key="2">
    <source>
        <dbReference type="PROSITE-ProRule" id="PRU00274"/>
    </source>
</evidence>
<evidence type="ECO:0000269" key="3">
    <source>
    </source>
</evidence>
<evidence type="ECO:0000305" key="4"/>
<proteinExistence type="evidence at protein level"/>
<dbReference type="EC" id="3.4.21.-"/>
<dbReference type="EMBL" id="AB010779">
    <property type="protein sequence ID" value="BAB20263.1"/>
    <property type="molecule type" value="mRNA"/>
</dbReference>
<dbReference type="EMBL" id="AF321182">
    <property type="protein sequence ID" value="AAG35070.1"/>
    <property type="molecule type" value="mRNA"/>
</dbReference>
<dbReference type="EMBL" id="AY358396">
    <property type="protein sequence ID" value="AAQ88762.1"/>
    <property type="status" value="ALT_INIT"/>
    <property type="molecule type" value="mRNA"/>
</dbReference>
<dbReference type="EMBL" id="AC003965">
    <property type="protein sequence ID" value="AAB93671.1"/>
    <property type="status" value="ALT_SEQ"/>
    <property type="molecule type" value="Genomic_DNA"/>
</dbReference>
<dbReference type="EMBL" id="BC009726">
    <property type="protein sequence ID" value="AAH09726.1"/>
    <property type="molecule type" value="mRNA"/>
</dbReference>
<dbReference type="CCDS" id="CCDS10481.1"/>
<dbReference type="RefSeq" id="NP_071402.1">
    <property type="nucleotide sequence ID" value="NM_022119.4"/>
</dbReference>
<dbReference type="RefSeq" id="XP_005255530.1">
    <property type="nucleotide sequence ID" value="XM_005255473.3"/>
</dbReference>
<dbReference type="RefSeq" id="XP_054169580.1">
    <property type="nucleotide sequence ID" value="XM_054313605.1"/>
</dbReference>
<dbReference type="RefSeq" id="XP_054187853.1">
    <property type="nucleotide sequence ID" value="XM_054331878.1"/>
</dbReference>
<dbReference type="SMR" id="Q9GZN4"/>
<dbReference type="BioGRID" id="122036">
    <property type="interactions" value="26"/>
</dbReference>
<dbReference type="FunCoup" id="Q9GZN4">
    <property type="interactions" value="183"/>
</dbReference>
<dbReference type="IntAct" id="Q9GZN4">
    <property type="interactions" value="13"/>
</dbReference>
<dbReference type="STRING" id="9606.ENSP00000161006"/>
<dbReference type="MEROPS" id="S01.252"/>
<dbReference type="GlyCosmos" id="Q9GZN4">
    <property type="glycosylation" value="1 site, No reported glycans"/>
</dbReference>
<dbReference type="GlyGen" id="Q9GZN4">
    <property type="glycosylation" value="1 site"/>
</dbReference>
<dbReference type="iPTMnet" id="Q9GZN4"/>
<dbReference type="BioMuta" id="PRSS22"/>
<dbReference type="DMDM" id="18202927"/>
<dbReference type="jPOST" id="Q9GZN4"/>
<dbReference type="MassIVE" id="Q9GZN4"/>
<dbReference type="PaxDb" id="9606-ENSP00000161006"/>
<dbReference type="PeptideAtlas" id="Q9GZN4"/>
<dbReference type="ProteomicsDB" id="80097"/>
<dbReference type="TopDownProteomics" id="Q9GZN4"/>
<dbReference type="Antibodypedia" id="42617">
    <property type="antibodies" value="79 antibodies from 20 providers"/>
</dbReference>
<dbReference type="DNASU" id="64063"/>
<dbReference type="Ensembl" id="ENST00000161006.8">
    <property type="protein sequence ID" value="ENSP00000161006.3"/>
    <property type="gene ID" value="ENSG00000005001.10"/>
</dbReference>
<dbReference type="Ensembl" id="ENST00000642189.2">
    <property type="protein sequence ID" value="ENSP00000495133.1"/>
    <property type="gene ID" value="ENSG00000282937.6"/>
</dbReference>
<dbReference type="GeneID" id="64063"/>
<dbReference type="KEGG" id="hsa:64063"/>
<dbReference type="MANE-Select" id="ENST00000161006.8">
    <property type="protein sequence ID" value="ENSP00000161006.3"/>
    <property type="RefSeq nucleotide sequence ID" value="NM_022119.4"/>
    <property type="RefSeq protein sequence ID" value="NP_071402.1"/>
</dbReference>
<dbReference type="UCSC" id="uc002cry.1">
    <property type="organism name" value="human"/>
</dbReference>
<dbReference type="AGR" id="HGNC:14368"/>
<dbReference type="CTD" id="64063"/>
<dbReference type="DisGeNET" id="64063"/>
<dbReference type="GeneCards" id="PRSS22"/>
<dbReference type="HGNC" id="HGNC:14368">
    <property type="gene designation" value="PRSS22"/>
</dbReference>
<dbReference type="HPA" id="ENSG00000005001">
    <property type="expression patterns" value="Tissue enhanced (esophagus, salivary gland)"/>
</dbReference>
<dbReference type="MalaCards" id="PRSS22"/>
<dbReference type="MIM" id="609343">
    <property type="type" value="gene"/>
</dbReference>
<dbReference type="neXtProt" id="NX_Q9GZN4"/>
<dbReference type="OpenTargets" id="ENSG00000005001"/>
<dbReference type="PharmGKB" id="PA33835"/>
<dbReference type="VEuPathDB" id="HostDB:ENSG00000005001"/>
<dbReference type="eggNOG" id="KOG3627">
    <property type="taxonomic scope" value="Eukaryota"/>
</dbReference>
<dbReference type="GeneTree" id="ENSGT00940000160305"/>
<dbReference type="HOGENOM" id="CLU_006842_0_4_1"/>
<dbReference type="InParanoid" id="Q9GZN4"/>
<dbReference type="OMA" id="GWGSVQD"/>
<dbReference type="OrthoDB" id="10002959at2759"/>
<dbReference type="PAN-GO" id="Q9GZN4">
    <property type="GO annotations" value="0 GO annotations based on evolutionary models"/>
</dbReference>
<dbReference type="PhylomeDB" id="Q9GZN4"/>
<dbReference type="TreeFam" id="TF351676"/>
<dbReference type="PathwayCommons" id="Q9GZN4"/>
<dbReference type="SignaLink" id="Q9GZN4"/>
<dbReference type="BioGRID-ORCS" id="64063">
    <property type="hits" value="8 hits in 1138 CRISPR screens"/>
</dbReference>
<dbReference type="GeneWiki" id="PRSS22"/>
<dbReference type="GenomeRNAi" id="64063"/>
<dbReference type="Pharos" id="Q9GZN4">
    <property type="development level" value="Tbio"/>
</dbReference>
<dbReference type="PRO" id="PR:Q9GZN4"/>
<dbReference type="Proteomes" id="UP000005640">
    <property type="component" value="Chromosome 16"/>
</dbReference>
<dbReference type="RNAct" id="Q9GZN4">
    <property type="molecule type" value="protein"/>
</dbReference>
<dbReference type="Bgee" id="ENSG00000005001">
    <property type="expression patterns" value="Expressed in lower esophagus mucosa and 82 other cell types or tissues"/>
</dbReference>
<dbReference type="ExpressionAtlas" id="Q9GZN4">
    <property type="expression patterns" value="baseline and differential"/>
</dbReference>
<dbReference type="GO" id="GO:0005615">
    <property type="term" value="C:extracellular space"/>
    <property type="evidence" value="ECO:0000314"/>
    <property type="project" value="UniProtKB"/>
</dbReference>
<dbReference type="GO" id="GO:0016504">
    <property type="term" value="F:peptidase activator activity"/>
    <property type="evidence" value="ECO:0000314"/>
    <property type="project" value="UniProtKB"/>
</dbReference>
<dbReference type="GO" id="GO:0004252">
    <property type="term" value="F:serine-type endopeptidase activity"/>
    <property type="evidence" value="ECO:0000314"/>
    <property type="project" value="UniProtKB"/>
</dbReference>
<dbReference type="GO" id="GO:0010952">
    <property type="term" value="P:positive regulation of peptidase activity"/>
    <property type="evidence" value="ECO:0000314"/>
    <property type="project" value="UniProtKB"/>
</dbReference>
<dbReference type="GO" id="GO:0006508">
    <property type="term" value="P:proteolysis"/>
    <property type="evidence" value="ECO:0000314"/>
    <property type="project" value="UniProtKB"/>
</dbReference>
<dbReference type="CDD" id="cd00190">
    <property type="entry name" value="Tryp_SPc"/>
    <property type="match status" value="1"/>
</dbReference>
<dbReference type="FunFam" id="2.40.10.10:FF:000039">
    <property type="entry name" value="Brain-specific serine protease 4"/>
    <property type="match status" value="1"/>
</dbReference>
<dbReference type="Gene3D" id="2.40.10.10">
    <property type="entry name" value="Trypsin-like serine proteases"/>
    <property type="match status" value="1"/>
</dbReference>
<dbReference type="InterPro" id="IPR009003">
    <property type="entry name" value="Peptidase_S1_PA"/>
</dbReference>
<dbReference type="InterPro" id="IPR043504">
    <property type="entry name" value="Peptidase_S1_PA_chymotrypsin"/>
</dbReference>
<dbReference type="InterPro" id="IPR001314">
    <property type="entry name" value="Peptidase_S1A"/>
</dbReference>
<dbReference type="InterPro" id="IPR001254">
    <property type="entry name" value="Trypsin_dom"/>
</dbReference>
<dbReference type="InterPro" id="IPR018114">
    <property type="entry name" value="TRYPSIN_HIS"/>
</dbReference>
<dbReference type="InterPro" id="IPR033116">
    <property type="entry name" value="TRYPSIN_SER"/>
</dbReference>
<dbReference type="PANTHER" id="PTHR24252">
    <property type="entry name" value="ACROSIN-RELATED"/>
    <property type="match status" value="1"/>
</dbReference>
<dbReference type="PANTHER" id="PTHR24252:SF7">
    <property type="entry name" value="HYALIN"/>
    <property type="match status" value="1"/>
</dbReference>
<dbReference type="Pfam" id="PF00089">
    <property type="entry name" value="Trypsin"/>
    <property type="match status" value="1"/>
</dbReference>
<dbReference type="PRINTS" id="PR00722">
    <property type="entry name" value="CHYMOTRYPSIN"/>
</dbReference>
<dbReference type="SMART" id="SM00020">
    <property type="entry name" value="Tryp_SPc"/>
    <property type="match status" value="1"/>
</dbReference>
<dbReference type="SUPFAM" id="SSF50494">
    <property type="entry name" value="Trypsin-like serine proteases"/>
    <property type="match status" value="1"/>
</dbReference>
<dbReference type="PROSITE" id="PS50240">
    <property type="entry name" value="TRYPSIN_DOM"/>
    <property type="match status" value="1"/>
</dbReference>
<dbReference type="PROSITE" id="PS00134">
    <property type="entry name" value="TRYPSIN_HIS"/>
    <property type="match status" value="1"/>
</dbReference>
<dbReference type="PROSITE" id="PS00135">
    <property type="entry name" value="TRYPSIN_SER"/>
    <property type="match status" value="1"/>
</dbReference>
<accession>Q9GZN4</accession>
<accession>O43342</accession>
<accession>Q6UXE0</accession>
<organism>
    <name type="scientific">Homo sapiens</name>
    <name type="common">Human</name>
    <dbReference type="NCBI Taxonomy" id="9606"/>
    <lineage>
        <taxon>Eukaryota</taxon>
        <taxon>Metazoa</taxon>
        <taxon>Chordata</taxon>
        <taxon>Craniata</taxon>
        <taxon>Vertebrata</taxon>
        <taxon>Euteleostomi</taxon>
        <taxon>Mammalia</taxon>
        <taxon>Eutheria</taxon>
        <taxon>Euarchontoglires</taxon>
        <taxon>Primates</taxon>
        <taxon>Haplorrhini</taxon>
        <taxon>Catarrhini</taxon>
        <taxon>Hominidae</taxon>
        <taxon>Homo</taxon>
    </lineage>
</organism>
<name>BSSP4_HUMAN</name>
<protein>
    <recommendedName>
        <fullName>Brain-specific serine protease 4</fullName>
        <shortName>BSSP-4</shortName>
        <ecNumber>3.4.21.-</ecNumber>
    </recommendedName>
    <alternativeName>
        <fullName>Serine protease 22</fullName>
    </alternativeName>
    <alternativeName>
        <fullName>Serine protease 26</fullName>
    </alternativeName>
    <alternativeName>
        <fullName>Tryptase epsilon</fullName>
    </alternativeName>
</protein>
<keyword id="KW-1015">Disulfide bond</keyword>
<keyword id="KW-0325">Glycoprotein</keyword>
<keyword id="KW-0378">Hydrolase</keyword>
<keyword id="KW-0645">Protease</keyword>
<keyword id="KW-1267">Proteomics identification</keyword>
<keyword id="KW-1185">Reference proteome</keyword>
<keyword id="KW-0964">Secreted</keyword>
<keyword id="KW-0720">Serine protease</keyword>
<keyword id="KW-0732">Signal</keyword>
<reference key="1">
    <citation type="submission" date="1998-01" db="EMBL/GenBank/DDBJ databases">
        <title>Cloning and characterization of a human brain-specific serine protease, hBSSP-4.</title>
        <authorList>
            <person name="Mitsui S."/>
            <person name="Okui A."/>
            <person name="Kominami K."/>
            <person name="Yamaguchi N."/>
        </authorList>
    </citation>
    <scope>NUCLEOTIDE SEQUENCE [MRNA]</scope>
    <source>
        <tissue>Brain</tissue>
    </source>
</reference>
<reference key="2">
    <citation type="journal article" date="2001" name="J. Biol. Chem.">
        <title>Human tryptase epsilon (PRSS22), a new member of the chromosome 16p13.3 family of human serine proteases expressed in airway epithelial cells.</title>
        <authorList>
            <person name="Wong G.W."/>
            <person name="Yasuda S."/>
            <person name="Madhusudhan M.S."/>
            <person name="Li L."/>
            <person name="Yang Y."/>
            <person name="Krilis S.A."/>
            <person name="Sali A."/>
            <person name="Stevens R.L."/>
        </authorList>
    </citation>
    <scope>NUCLEOTIDE SEQUENCE [MRNA]</scope>
    <scope>FUNCTION</scope>
    <scope>SUBCELLULAR LOCATION</scope>
    <scope>TISSUE SPECIFICITY</scope>
    <scope>GLYCOSYLATION AT ASN-70</scope>
    <source>
        <tissue>Pancreas</tissue>
    </source>
</reference>
<reference key="3">
    <citation type="journal article" date="2003" name="Genome Res.">
        <title>The secreted protein discovery initiative (SPDI), a large-scale effort to identify novel human secreted and transmembrane proteins: a bioinformatics assessment.</title>
        <authorList>
            <person name="Clark H.F."/>
            <person name="Gurney A.L."/>
            <person name="Abaya E."/>
            <person name="Baker K."/>
            <person name="Baldwin D.T."/>
            <person name="Brush J."/>
            <person name="Chen J."/>
            <person name="Chow B."/>
            <person name="Chui C."/>
            <person name="Crowley C."/>
            <person name="Currell B."/>
            <person name="Deuel B."/>
            <person name="Dowd P."/>
            <person name="Eaton D."/>
            <person name="Foster J.S."/>
            <person name="Grimaldi C."/>
            <person name="Gu Q."/>
            <person name="Hass P.E."/>
            <person name="Heldens S."/>
            <person name="Huang A."/>
            <person name="Kim H.S."/>
            <person name="Klimowski L."/>
            <person name="Jin Y."/>
            <person name="Johnson S."/>
            <person name="Lee J."/>
            <person name="Lewis L."/>
            <person name="Liao D."/>
            <person name="Mark M.R."/>
            <person name="Robbie E."/>
            <person name="Sanchez C."/>
            <person name="Schoenfeld J."/>
            <person name="Seshagiri S."/>
            <person name="Simmons L."/>
            <person name="Singh J."/>
            <person name="Smith V."/>
            <person name="Stinson J."/>
            <person name="Vagts A."/>
            <person name="Vandlen R.L."/>
            <person name="Watanabe C."/>
            <person name="Wieand D."/>
            <person name="Woods K."/>
            <person name="Xie M.-H."/>
            <person name="Yansura D.G."/>
            <person name="Yi S."/>
            <person name="Yu G."/>
            <person name="Yuan J."/>
            <person name="Zhang M."/>
            <person name="Zhang Z."/>
            <person name="Goddard A.D."/>
            <person name="Wood W.I."/>
            <person name="Godowski P.J."/>
            <person name="Gray A.M."/>
        </authorList>
    </citation>
    <scope>NUCLEOTIDE SEQUENCE [LARGE SCALE MRNA]</scope>
</reference>
<reference key="4">
    <citation type="journal article" date="2004" name="Nature">
        <title>The sequence and analysis of duplication-rich human chromosome 16.</title>
        <authorList>
            <person name="Martin J."/>
            <person name="Han C."/>
            <person name="Gordon L.A."/>
            <person name="Terry A."/>
            <person name="Prabhakar S."/>
            <person name="She X."/>
            <person name="Xie G."/>
            <person name="Hellsten U."/>
            <person name="Chan Y.M."/>
            <person name="Altherr M."/>
            <person name="Couronne O."/>
            <person name="Aerts A."/>
            <person name="Bajorek E."/>
            <person name="Black S."/>
            <person name="Blumer H."/>
            <person name="Branscomb E."/>
            <person name="Brown N.C."/>
            <person name="Bruno W.J."/>
            <person name="Buckingham J.M."/>
            <person name="Callen D.F."/>
            <person name="Campbell C.S."/>
            <person name="Campbell M.L."/>
            <person name="Campbell E.W."/>
            <person name="Caoile C."/>
            <person name="Challacombe J.F."/>
            <person name="Chasteen L.A."/>
            <person name="Chertkov O."/>
            <person name="Chi H.C."/>
            <person name="Christensen M."/>
            <person name="Clark L.M."/>
            <person name="Cohn J.D."/>
            <person name="Denys M."/>
            <person name="Detter J.C."/>
            <person name="Dickson M."/>
            <person name="Dimitrijevic-Bussod M."/>
            <person name="Escobar J."/>
            <person name="Fawcett J.J."/>
            <person name="Flowers D."/>
            <person name="Fotopulos D."/>
            <person name="Glavina T."/>
            <person name="Gomez M."/>
            <person name="Gonzales E."/>
            <person name="Goodstein D."/>
            <person name="Goodwin L.A."/>
            <person name="Grady D.L."/>
            <person name="Grigoriev I."/>
            <person name="Groza M."/>
            <person name="Hammon N."/>
            <person name="Hawkins T."/>
            <person name="Haydu L."/>
            <person name="Hildebrand C.E."/>
            <person name="Huang W."/>
            <person name="Israni S."/>
            <person name="Jett J."/>
            <person name="Jewett P.B."/>
            <person name="Kadner K."/>
            <person name="Kimball H."/>
            <person name="Kobayashi A."/>
            <person name="Krawczyk M.-C."/>
            <person name="Leyba T."/>
            <person name="Longmire J.L."/>
            <person name="Lopez F."/>
            <person name="Lou Y."/>
            <person name="Lowry S."/>
            <person name="Ludeman T."/>
            <person name="Manohar C.F."/>
            <person name="Mark G.A."/>
            <person name="McMurray K.L."/>
            <person name="Meincke L.J."/>
            <person name="Morgan J."/>
            <person name="Moyzis R.K."/>
            <person name="Mundt M.O."/>
            <person name="Munk A.C."/>
            <person name="Nandkeshwar R.D."/>
            <person name="Pitluck S."/>
            <person name="Pollard M."/>
            <person name="Predki P."/>
            <person name="Parson-Quintana B."/>
            <person name="Ramirez L."/>
            <person name="Rash S."/>
            <person name="Retterer J."/>
            <person name="Ricke D.O."/>
            <person name="Robinson D.L."/>
            <person name="Rodriguez A."/>
            <person name="Salamov A."/>
            <person name="Saunders E.H."/>
            <person name="Scott D."/>
            <person name="Shough T."/>
            <person name="Stallings R.L."/>
            <person name="Stalvey M."/>
            <person name="Sutherland R.D."/>
            <person name="Tapia R."/>
            <person name="Tesmer J.G."/>
            <person name="Thayer N."/>
            <person name="Thompson L.S."/>
            <person name="Tice H."/>
            <person name="Torney D.C."/>
            <person name="Tran-Gyamfi M."/>
            <person name="Tsai M."/>
            <person name="Ulanovsky L.E."/>
            <person name="Ustaszewska A."/>
            <person name="Vo N."/>
            <person name="White P.S."/>
            <person name="Williams A.L."/>
            <person name="Wills P.L."/>
            <person name="Wu J.-R."/>
            <person name="Wu K."/>
            <person name="Yang J."/>
            <person name="DeJong P."/>
            <person name="Bruce D."/>
            <person name="Doggett N.A."/>
            <person name="Deaven L."/>
            <person name="Schmutz J."/>
            <person name="Grimwood J."/>
            <person name="Richardson P."/>
            <person name="Rokhsar D.S."/>
            <person name="Eichler E.E."/>
            <person name="Gilna P."/>
            <person name="Lucas S.M."/>
            <person name="Myers R.M."/>
            <person name="Rubin E.M."/>
            <person name="Pennacchio L.A."/>
        </authorList>
    </citation>
    <scope>NUCLEOTIDE SEQUENCE [LARGE SCALE GENOMIC DNA]</scope>
</reference>
<reference key="5">
    <citation type="journal article" date="2004" name="Genome Res.">
        <title>The status, quality, and expansion of the NIH full-length cDNA project: the Mammalian Gene Collection (MGC).</title>
        <authorList>
            <consortium name="The MGC Project Team"/>
        </authorList>
    </citation>
    <scope>NUCLEOTIDE SEQUENCE [LARGE SCALE MRNA]</scope>
    <source>
        <tissue>Pancreas</tissue>
    </source>
</reference>
<sequence length="317" mass="33732">MVVSGAPPALGGGCLGTFTSLLLLASTAILNAARIPVPPACGKPQQLNRVVGGEDSTDSEWPWIVSIQKNGTHHCAGSLLTSRWVITAAHCFKDNLNKPYLFSVLLGAWQLGNPGSRSQKVGVAWVEPHPVYSWKEGACADIALVRLERSIQFSERVLPICLPDASIHLPPNTHCWISGWGSIQDGVPLPHPQTLQKLKVPIIDSEVCSHLYWRGAGQGPITEDMLCAGYLEGERDACLGDSGGPLMCQVDGAWLLAGIISWGEGCAERNRPGVYISLSAHRSWVEKIVQGVQLRGRAQGGGALRAPSQGSGAAARS</sequence>
<comment type="function">
    <text evidence="3">Preferentially cleaves the synthetic substrate H-D-Leu-Thr-Arg-pNA compared to tosyl-Gly-Pro-Arg-pNA.</text>
</comment>
<comment type="interaction">
    <interactant intactId="EBI-21866379">
        <id>Q9GZN4</id>
    </interactant>
    <interactant intactId="EBI-989143">
        <id>P35813</id>
        <label>PPM1A</label>
    </interactant>
    <organismsDiffer>false</organismsDiffer>
    <experiments>3</experiments>
</comment>
<comment type="subcellular location">
    <subcellularLocation>
        <location evidence="3">Secreted</location>
    </subcellularLocation>
</comment>
<comment type="tissue specificity">
    <text evidence="3">Expressed abundantly in the epithelial cells of the airways, including trachea, esophagus and fetal lung. Scarce in adult lung. Expressed at low levels in placenta, pancreas, prostate and thyroid gland.</text>
</comment>
<comment type="similarity">
    <text evidence="2">Belongs to the peptidase S1 family.</text>
</comment>
<comment type="sequence caution" evidence="4">
    <conflict type="erroneous gene model prediction">
        <sequence resource="EMBL-CDS" id="AAB93671"/>
    </conflict>
</comment>
<comment type="sequence caution" evidence="4">
    <conflict type="erroneous initiation">
        <sequence resource="EMBL-CDS" id="AAQ88762"/>
    </conflict>
</comment>